<comment type="function">
    <text evidence="1 11">Carboxylesterase; part of the gene cluster that mediates the biosynthesis of patulin, an acetate-derived tetraketide mycotoxin produced by several fungal species that shows antimicrobial properties against several bacteria (By similarity). The function of patB in patulin synthesis has still to be characterized (By similarity). The pathway begins with the synthesis of 6-methylsalicylic acid by the polyketide synthase (PKS) patK via condensation of acetate and malonate units. The 6-methylsalicylic acid decarboxylase patG then catalyzes the decarboxylation of 6-methylsalicylic acid to yield m-cresol (also known as 3-methylphenol). These first reactions occur in the cytosol. The intermediate m-cresol is then transported into the endoplasmic reticulum where the cytochrome P450 monooxygenase patH converts it to m-hydroxybenzyl alcohol, which is further converted to gentisyl alcohol by the cytochrome P450 monooxygenase patI. The oxidoreductases patJ and patO further convert gentisyl alcohol to isoepoxydon in the vacuole. PatN catalyzes then the transformation of isoepoxydon into phyllostine. The cluster protein patF is responsible for the conversion from phyllostine to neopatulin whereas the alcohol dehydrogenase patD converts neopatulin to E-ascladiol. The steps between isoepoxydon and E-ascladiol occur in the cytosol, and E-ascladiol is probably secreted to the extracellular space by one of the cluster-specific transporters patC or patM. Finally, the secreted patulin synthase patE catalyzes the conversion of E-ascladiol to patulin (Probable) (PubMed:19383676).</text>
</comment>
<comment type="catalytic activity">
    <reaction evidence="5">
        <text>a carboxylic ester + H2O = an alcohol + a carboxylate + H(+)</text>
        <dbReference type="Rhea" id="RHEA:21164"/>
        <dbReference type="ChEBI" id="CHEBI:15377"/>
        <dbReference type="ChEBI" id="CHEBI:15378"/>
        <dbReference type="ChEBI" id="CHEBI:29067"/>
        <dbReference type="ChEBI" id="CHEBI:30879"/>
        <dbReference type="ChEBI" id="CHEBI:33308"/>
        <dbReference type="EC" id="3.1.1.1"/>
    </reaction>
</comment>
<comment type="pathway">
    <text evidence="11">Mycotoxin biosynthesis; patulin biosynthesis.</text>
</comment>
<comment type="subcellular location">
    <subcellularLocation>
        <location evidence="1">Cytoplasm</location>
        <location evidence="1">Cytosol</location>
    </subcellularLocation>
</comment>
<comment type="biotechnology">
    <text evidence="6 7 8">Patulin was originally used as an antibiotic and specifically trialed to be used against the common cold, but it is no longer used for that purpose since it has been shown to induce immunological, neurological and gastrointestinal effects (PubMed:15082620). Genotoxic effects of patulin with dose-dependent increase in DNA strand breaks in brain, liver and kidneys have been detected in mice (PubMed:22222931). However, more recently, it has been proposed that patulin might also have anti-tumor properties (PubMed:26619846).</text>
</comment>
<comment type="similarity">
    <text evidence="10">Belongs to the type-B carboxylesterase/lipase family.</text>
</comment>
<name>PATB_ASPCL</name>
<organism>
    <name type="scientific">Aspergillus clavatus (strain ATCC 1007 / CBS 513.65 / DSM 816 / NCTC 3887 / NRRL 1 / QM 1276 / 107)</name>
    <dbReference type="NCBI Taxonomy" id="344612"/>
    <lineage>
        <taxon>Eukaryota</taxon>
        <taxon>Fungi</taxon>
        <taxon>Dikarya</taxon>
        <taxon>Ascomycota</taxon>
        <taxon>Pezizomycotina</taxon>
        <taxon>Eurotiomycetes</taxon>
        <taxon>Eurotiomycetidae</taxon>
        <taxon>Eurotiales</taxon>
        <taxon>Aspergillaceae</taxon>
        <taxon>Aspergillus</taxon>
        <taxon>Aspergillus subgen. Fumigati</taxon>
    </lineage>
</organism>
<protein>
    <recommendedName>
        <fullName evidence="9">Carboxylesterase patB</fullName>
        <ecNumber evidence="11">3.1.1.1</ecNumber>
    </recommendedName>
    <alternativeName>
        <fullName evidence="9">Patulin synthesis protein B</fullName>
    </alternativeName>
</protein>
<keyword id="KW-0963">Cytoplasm</keyword>
<keyword id="KW-0325">Glycoprotein</keyword>
<keyword id="KW-0378">Hydrolase</keyword>
<keyword id="KW-1185">Reference proteome</keyword>
<keyword id="KW-0732">Signal</keyword>
<evidence type="ECO:0000250" key="1">
    <source>
        <dbReference type="UniProtKB" id="A0A075TXZ3"/>
    </source>
</evidence>
<evidence type="ECO:0000250" key="2">
    <source>
        <dbReference type="UniProtKB" id="P22303"/>
    </source>
</evidence>
<evidence type="ECO:0000255" key="3"/>
<evidence type="ECO:0000255" key="4">
    <source>
        <dbReference type="PROSITE-ProRule" id="PRU00498"/>
    </source>
</evidence>
<evidence type="ECO:0000255" key="5">
    <source>
        <dbReference type="PROSITE-ProRule" id="PRU10039"/>
    </source>
</evidence>
<evidence type="ECO:0000269" key="6">
    <source>
    </source>
</evidence>
<evidence type="ECO:0000269" key="7">
    <source>
    </source>
</evidence>
<evidence type="ECO:0000269" key="8">
    <source>
    </source>
</evidence>
<evidence type="ECO:0000303" key="9">
    <source>
    </source>
</evidence>
<evidence type="ECO:0000305" key="10"/>
<evidence type="ECO:0000305" key="11">
    <source>
    </source>
</evidence>
<feature type="signal peptide" evidence="3">
    <location>
        <begin position="1"/>
        <end position="16"/>
    </location>
</feature>
<feature type="chain" id="PRO_5005120964" description="Carboxylesterase patB">
    <location>
        <begin position="17"/>
        <end position="555"/>
    </location>
</feature>
<feature type="active site" description="Acyl-ester intermediate" evidence="5">
    <location>
        <position position="258"/>
    </location>
</feature>
<feature type="active site" description="Charge relay system" evidence="2">
    <location>
        <position position="380"/>
    </location>
</feature>
<feature type="binding site" evidence="2">
    <location>
        <position position="258"/>
    </location>
    <ligand>
        <name>substrate</name>
    </ligand>
</feature>
<feature type="glycosylation site" description="N-linked (GlcNAc...) asparagine" evidence="4">
    <location>
        <position position="37"/>
    </location>
</feature>
<feature type="glycosylation site" description="N-linked (GlcNAc...) asparagine" evidence="4">
    <location>
        <position position="75"/>
    </location>
</feature>
<feature type="glycosylation site" description="N-linked (GlcNAc...) asparagine" evidence="4">
    <location>
        <position position="311"/>
    </location>
</feature>
<feature type="glycosylation site" description="N-linked (GlcNAc...) asparagine" evidence="4">
    <location>
        <position position="388"/>
    </location>
</feature>
<feature type="glycosylation site" description="N-linked (GlcNAc...) asparagine" evidence="4">
    <location>
        <position position="491"/>
    </location>
</feature>
<reference key="1">
    <citation type="journal article" date="2008" name="PLoS Genet.">
        <title>Genomic islands in the pathogenic filamentous fungus Aspergillus fumigatus.</title>
        <authorList>
            <person name="Fedorova N.D."/>
            <person name="Khaldi N."/>
            <person name="Joardar V.S."/>
            <person name="Maiti R."/>
            <person name="Amedeo P."/>
            <person name="Anderson M.J."/>
            <person name="Crabtree J."/>
            <person name="Silva J.C."/>
            <person name="Badger J.H."/>
            <person name="Albarraq A."/>
            <person name="Angiuoli S."/>
            <person name="Bussey H."/>
            <person name="Bowyer P."/>
            <person name="Cotty P.J."/>
            <person name="Dyer P.S."/>
            <person name="Egan A."/>
            <person name="Galens K."/>
            <person name="Fraser-Liggett C.M."/>
            <person name="Haas B.J."/>
            <person name="Inman J.M."/>
            <person name="Kent R."/>
            <person name="Lemieux S."/>
            <person name="Malavazi I."/>
            <person name="Orvis J."/>
            <person name="Roemer T."/>
            <person name="Ronning C.M."/>
            <person name="Sundaram J.P."/>
            <person name="Sutton G."/>
            <person name="Turner G."/>
            <person name="Venter J.C."/>
            <person name="White O.R."/>
            <person name="Whitty B.R."/>
            <person name="Youngman P."/>
            <person name="Wolfe K.H."/>
            <person name="Goldman G.H."/>
            <person name="Wortman J.R."/>
            <person name="Jiang B."/>
            <person name="Denning D.W."/>
            <person name="Nierman W.C."/>
        </authorList>
    </citation>
    <scope>NUCLEOTIDE SEQUENCE [LARGE SCALE GENOMIC DNA]</scope>
    <source>
        <strain>ATCC 1007 / CBS 513.65 / DSM 816 / NCTC 3887 / NRRL 1 / QM 1276 / 107</strain>
    </source>
</reference>
<reference key="2">
    <citation type="journal article" date="2004" name="Int. J. Epidemiol.">
        <title>Clinical trial of patulin in the common cold. 1944.</title>
        <authorList>
            <consortium name="Patulin Clinical Trials Committee, Medical Research Council"/>
        </authorList>
    </citation>
    <scope>BIOTECHNOLOGY</scope>
</reference>
<reference key="3">
    <citation type="journal article" date="2009" name="Microbiology">
        <title>Molecular cloning and functional characterization of two CYP619 cytochrome P450s involved in biosynthesis of patulin in Aspergillus clavatus.</title>
        <authorList>
            <person name="Artigot M.P."/>
            <person name="Loiseau N."/>
            <person name="Laffitte J."/>
            <person name="Mas-Reguieg L."/>
            <person name="Tadrist S."/>
            <person name="Oswald I.P."/>
            <person name="Puel O."/>
        </authorList>
    </citation>
    <scope>FUNCTION</scope>
</reference>
<reference key="4">
    <citation type="journal article" date="2012" name="Food Chem. Toxicol.">
        <title>DNA damage in organs of mice treated acutely with patulin, a known mycotoxin.</title>
        <authorList>
            <person name="de Melo F.T."/>
            <person name="de Oliveira I.M."/>
            <person name="Greggio S."/>
            <person name="Dacosta J.C."/>
            <person name="Guecheva T.N."/>
            <person name="Saffi J."/>
            <person name="Henriques J.A."/>
            <person name="Rosa R.M."/>
        </authorList>
    </citation>
    <scope>BIOTECHNOLOGY</scope>
</reference>
<reference key="5">
    <citation type="journal article" date="2016" name="Tumor Biol.">
        <title>The potential effect of patulin on mice bearing melanoma cells: an anti-tumour or carcinogenic effect?</title>
        <authorList>
            <person name="Boussabbeh M."/>
            <person name="Ben Salem I."/>
            <person name="Rjiba-Touati K."/>
            <person name="Bouyahya C."/>
            <person name="Neffati F."/>
            <person name="Najjar M.F."/>
            <person name="Bacha H."/>
            <person name="Abid-Essefi S."/>
        </authorList>
    </citation>
    <scope>BIOTECHNOLOGY</scope>
</reference>
<gene>
    <name evidence="9" type="primary">patB</name>
    <name type="ORF">ACLA_093570</name>
</gene>
<dbReference type="EC" id="3.1.1.1" evidence="11"/>
<dbReference type="EMBL" id="DS027052">
    <property type="protein sequence ID" value="EAW11658.1"/>
    <property type="molecule type" value="Genomic_DNA"/>
</dbReference>
<dbReference type="RefSeq" id="XP_001273084.1">
    <property type="nucleotide sequence ID" value="XM_001273083.1"/>
</dbReference>
<dbReference type="SMR" id="A1CFK9"/>
<dbReference type="STRING" id="344612.A1CFK9"/>
<dbReference type="ESTHER" id="aspcl-a1cfk9">
    <property type="family name" value="Fungal_carboxylesterase_lipase"/>
</dbReference>
<dbReference type="GlyCosmos" id="A1CFK9">
    <property type="glycosylation" value="5 sites, No reported glycans"/>
</dbReference>
<dbReference type="EnsemblFungi" id="EAW11658">
    <property type="protein sequence ID" value="EAW11658"/>
    <property type="gene ID" value="ACLA_093570"/>
</dbReference>
<dbReference type="GeneID" id="4704864"/>
<dbReference type="KEGG" id="act:ACLA_093570"/>
<dbReference type="VEuPathDB" id="FungiDB:ACLA_093570"/>
<dbReference type="eggNOG" id="KOG1516">
    <property type="taxonomic scope" value="Eukaryota"/>
</dbReference>
<dbReference type="HOGENOM" id="CLU_006586_10_5_1"/>
<dbReference type="OMA" id="AIWVAMN"/>
<dbReference type="OrthoDB" id="408631at2759"/>
<dbReference type="UniPathway" id="UPA00918"/>
<dbReference type="Proteomes" id="UP000006701">
    <property type="component" value="Unassembled WGS sequence"/>
</dbReference>
<dbReference type="GO" id="GO:0005829">
    <property type="term" value="C:cytosol"/>
    <property type="evidence" value="ECO:0007669"/>
    <property type="project" value="UniProtKB-SubCell"/>
</dbReference>
<dbReference type="GO" id="GO:0106435">
    <property type="term" value="F:carboxylesterase activity"/>
    <property type="evidence" value="ECO:0007669"/>
    <property type="project" value="UniProtKB-EC"/>
</dbReference>
<dbReference type="Gene3D" id="3.40.50.1820">
    <property type="entry name" value="alpha/beta hydrolase"/>
    <property type="match status" value="1"/>
</dbReference>
<dbReference type="InterPro" id="IPR029058">
    <property type="entry name" value="AB_hydrolase_fold"/>
</dbReference>
<dbReference type="InterPro" id="IPR002018">
    <property type="entry name" value="CarbesteraseB"/>
</dbReference>
<dbReference type="InterPro" id="IPR019826">
    <property type="entry name" value="Carboxylesterase_B_AS"/>
</dbReference>
<dbReference type="InterPro" id="IPR019819">
    <property type="entry name" value="Carboxylesterase_B_CS"/>
</dbReference>
<dbReference type="InterPro" id="IPR050309">
    <property type="entry name" value="Type-B_Carboxylest/Lipase"/>
</dbReference>
<dbReference type="PANTHER" id="PTHR11559">
    <property type="entry name" value="CARBOXYLESTERASE"/>
    <property type="match status" value="1"/>
</dbReference>
<dbReference type="Pfam" id="PF00135">
    <property type="entry name" value="COesterase"/>
    <property type="match status" value="1"/>
</dbReference>
<dbReference type="SUPFAM" id="SSF53474">
    <property type="entry name" value="alpha/beta-Hydrolases"/>
    <property type="match status" value="1"/>
</dbReference>
<dbReference type="PROSITE" id="PS00122">
    <property type="entry name" value="CARBOXYLESTERASE_B_1"/>
    <property type="match status" value="1"/>
</dbReference>
<dbReference type="PROSITE" id="PS00941">
    <property type="entry name" value="CARBOXYLESTERASE_B_2"/>
    <property type="match status" value="1"/>
</dbReference>
<sequence>MLFTASLLLLLPWASAAPANLPIVDLGYQRHQAISFNSTGQYYSFTNIRYAEPPLGSRRFAPPVAPHGRSKNIVNGTGLGYKCPQALACWFNVQNKFTSAAAAGTPFDFNAAYEEVYTKDACTEPAKQDPLQSEDCLFLDVYVPQDVWQKGPQAAHQKGGAPVLVYLQDGAYVGGSKSDQNPAGLIARSREEGSSGMIYVGINYRLGVFGWLSGRKFTSSGGKPNAGLLDQRLALEWIQRHIHLFGGDPSRVTVMGVSAGGGSIIMQMTAYGRGISPPFAQVITQSPAWEPGTKTPAIEDDLFDTFLASLNVTSLDQARRLPSHALTDANYRLVASRPYGAGVLGPAIDGDFIPDSPKRLLLQGKANPGVRVLTSYTAAEGFGIAPANITDEASFQRYVGLMLAGTDASVRTHAATVLYPAVFDGSMPYRTQHDRASLLWADLAASCNTRYLHAAVRTPGYAIEYSVPPALHLSDTPSVFYNGPVADPTVNGTIAELLQRQIVRFVKTGNPNGEPDPEVPVYDGRDLLDLGDDGVLVRPDSTDNARCEYWQKVHF</sequence>
<accession>A1CFK9</accession>
<proteinExistence type="evidence at protein level"/>